<feature type="signal peptide" evidence="2">
    <location>
        <begin position="1"/>
        <end position="26"/>
    </location>
</feature>
<feature type="chain" id="PRO_0000035870" description="Spondin-2">
    <location>
        <begin position="27"/>
        <end position="331"/>
    </location>
</feature>
<feature type="domain" description="Spondin" evidence="4">
    <location>
        <begin position="31"/>
        <end position="221"/>
    </location>
</feature>
<feature type="domain" description="TSP type-1" evidence="3">
    <location>
        <begin position="277"/>
        <end position="331"/>
    </location>
</feature>
<feature type="binding site" evidence="11">
    <location>
        <position position="141"/>
    </location>
    <ligand>
        <name>a divalent metal cation</name>
        <dbReference type="ChEBI" id="CHEBI:60240"/>
    </ligand>
</feature>
<feature type="binding site" evidence="9 13">
    <location>
        <position position="160"/>
    </location>
    <ligand>
        <name>Ca(2+)</name>
        <dbReference type="ChEBI" id="CHEBI:29108"/>
    </ligand>
</feature>
<feature type="binding site" evidence="9 13">
    <location>
        <position position="188"/>
    </location>
    <ligand>
        <name>Ca(2+)</name>
        <dbReference type="ChEBI" id="CHEBI:29108"/>
    </ligand>
</feature>
<feature type="binding site" evidence="9 13">
    <location>
        <position position="192"/>
    </location>
    <ligand>
        <name>Ca(2+)</name>
        <dbReference type="ChEBI" id="CHEBI:29108"/>
    </ligand>
</feature>
<feature type="site" description="Important for metal ion-dependent interaction with integrin" evidence="12">
    <location>
        <position position="141"/>
    </location>
</feature>
<feature type="glycosylation site" description="C-linked (Man) tryptophan" evidence="9">
    <location>
        <position position="283"/>
    </location>
</feature>
<feature type="disulfide bond" evidence="3 9">
    <location>
        <begin position="35"/>
        <end position="171"/>
    </location>
</feature>
<feature type="sequence variant" id="VAR_055149" description="In dbSNP:rs6836335.">
    <original>R</original>
    <variation>G</variation>
    <location>
        <position position="38"/>
    </location>
</feature>
<feature type="sequence variant" id="VAR_019701" description="In dbSNP:rs922697." evidence="5 6 7 8 10">
    <original>L</original>
    <variation>P</variation>
    <location>
        <position position="40"/>
    </location>
</feature>
<feature type="sequence variant" id="VAR_019702" description="In dbSNP:rs11247975." evidence="6 7 8">
    <original>A</original>
    <variation>E</variation>
    <location>
        <position position="122"/>
    </location>
</feature>
<feature type="sequence variant" id="VAR_019703" description="In dbSNP:rs2279279." evidence="6 7 8 10">
    <original>V</original>
    <variation>L</variation>
    <location>
        <position position="242"/>
    </location>
</feature>
<feature type="mutagenesis site" description="Strongly reduced metal-dependent interaction with integrin; when associated with A-141." evidence="9">
    <original>K</original>
    <variation>A</variation>
    <location>
        <position position="42"/>
    </location>
</feature>
<feature type="mutagenesis site" description="Strongly reduced metal-dependent interaction with integrin; when associated with A-42." evidence="9">
    <original>E</original>
    <variation>A</variation>
    <location>
        <position position="141"/>
    </location>
</feature>
<feature type="strand" evidence="14">
    <location>
        <begin position="41"/>
        <end position="49"/>
    </location>
</feature>
<feature type="turn" evidence="14">
    <location>
        <begin position="53"/>
        <end position="55"/>
    </location>
</feature>
<feature type="strand" evidence="14">
    <location>
        <begin position="63"/>
        <end position="65"/>
    </location>
</feature>
<feature type="strand" evidence="14">
    <location>
        <begin position="67"/>
        <end position="77"/>
    </location>
</feature>
<feature type="helix" evidence="14">
    <location>
        <begin position="92"/>
        <end position="100"/>
    </location>
</feature>
<feature type="helix" evidence="14">
    <location>
        <begin position="104"/>
        <end position="117"/>
    </location>
</feature>
<feature type="strand" evidence="14">
    <location>
        <begin position="120"/>
        <end position="126"/>
    </location>
</feature>
<feature type="strand" evidence="14">
    <location>
        <begin position="129"/>
        <end position="131"/>
    </location>
</feature>
<feature type="strand" evidence="14">
    <location>
        <begin position="135"/>
        <end position="143"/>
    </location>
</feature>
<feature type="strand" evidence="14">
    <location>
        <begin position="148"/>
        <end position="157"/>
    </location>
</feature>
<feature type="strand" evidence="14">
    <location>
        <begin position="159"/>
        <end position="169"/>
    </location>
</feature>
<feature type="strand" evidence="14">
    <location>
        <begin position="178"/>
        <end position="184"/>
    </location>
</feature>
<feature type="strand" evidence="14">
    <location>
        <begin position="190"/>
        <end position="192"/>
    </location>
</feature>
<feature type="strand" evidence="14">
    <location>
        <begin position="215"/>
        <end position="218"/>
    </location>
</feature>
<feature type="strand" evidence="14">
    <location>
        <begin position="230"/>
        <end position="232"/>
    </location>
</feature>
<feature type="strand" evidence="14">
    <location>
        <begin position="236"/>
        <end position="243"/>
    </location>
</feature>
<reference key="1">
    <citation type="journal article" date="1999" name="Genomics">
        <title>Identification of genes (SPON2 and C20orf2) differentially expressed between cancerous and noncancerous lung cells by mRNA differential display.</title>
        <authorList>
            <person name="Manda R."/>
            <person name="Kohno T."/>
            <person name="Matsuno Y."/>
            <person name="Takenoshita S."/>
            <person name="Kuwano H."/>
            <person name="Yokota J."/>
        </authorList>
    </citation>
    <scope>NUCLEOTIDE SEQUENCE [MRNA]</scope>
    <scope>TISSUE SPECIFICITY</scope>
    <scope>VARIANT PRO-40</scope>
</reference>
<reference key="2">
    <citation type="journal article" date="2003" name="Genome Res.">
        <title>The secreted protein discovery initiative (SPDI), a large-scale effort to identify novel human secreted and transmembrane proteins: a bioinformatics assessment.</title>
        <authorList>
            <person name="Clark H.F."/>
            <person name="Gurney A.L."/>
            <person name="Abaya E."/>
            <person name="Baker K."/>
            <person name="Baldwin D.T."/>
            <person name="Brush J."/>
            <person name="Chen J."/>
            <person name="Chow B."/>
            <person name="Chui C."/>
            <person name="Crowley C."/>
            <person name="Currell B."/>
            <person name="Deuel B."/>
            <person name="Dowd P."/>
            <person name="Eaton D."/>
            <person name="Foster J.S."/>
            <person name="Grimaldi C."/>
            <person name="Gu Q."/>
            <person name="Hass P.E."/>
            <person name="Heldens S."/>
            <person name="Huang A."/>
            <person name="Kim H.S."/>
            <person name="Klimowski L."/>
            <person name="Jin Y."/>
            <person name="Johnson S."/>
            <person name="Lee J."/>
            <person name="Lewis L."/>
            <person name="Liao D."/>
            <person name="Mark M.R."/>
            <person name="Robbie E."/>
            <person name="Sanchez C."/>
            <person name="Schoenfeld J."/>
            <person name="Seshagiri S."/>
            <person name="Simmons L."/>
            <person name="Singh J."/>
            <person name="Smith V."/>
            <person name="Stinson J."/>
            <person name="Vagts A."/>
            <person name="Vandlen R.L."/>
            <person name="Watanabe C."/>
            <person name="Wieand D."/>
            <person name="Woods K."/>
            <person name="Xie M.-H."/>
            <person name="Yansura D.G."/>
            <person name="Yi S."/>
            <person name="Yu G."/>
            <person name="Yuan J."/>
            <person name="Zhang M."/>
            <person name="Zhang Z."/>
            <person name="Goddard A.D."/>
            <person name="Wood W.I."/>
            <person name="Godowski P.J."/>
            <person name="Gray A.M."/>
        </authorList>
    </citation>
    <scope>NUCLEOTIDE SEQUENCE [LARGE SCALE MRNA]</scope>
    <scope>VARIANTS PRO-40; GLU-122 AND LEU-242</scope>
</reference>
<reference key="3">
    <citation type="journal article" date="2004" name="Nat. Genet.">
        <title>Complete sequencing and characterization of 21,243 full-length human cDNAs.</title>
        <authorList>
            <person name="Ota T."/>
            <person name="Suzuki Y."/>
            <person name="Nishikawa T."/>
            <person name="Otsuki T."/>
            <person name="Sugiyama T."/>
            <person name="Irie R."/>
            <person name="Wakamatsu A."/>
            <person name="Hayashi K."/>
            <person name="Sato H."/>
            <person name="Nagai K."/>
            <person name="Kimura K."/>
            <person name="Makita H."/>
            <person name="Sekine M."/>
            <person name="Obayashi M."/>
            <person name="Nishi T."/>
            <person name="Shibahara T."/>
            <person name="Tanaka T."/>
            <person name="Ishii S."/>
            <person name="Yamamoto J."/>
            <person name="Saito K."/>
            <person name="Kawai Y."/>
            <person name="Isono Y."/>
            <person name="Nakamura Y."/>
            <person name="Nagahari K."/>
            <person name="Murakami K."/>
            <person name="Yasuda T."/>
            <person name="Iwayanagi T."/>
            <person name="Wagatsuma M."/>
            <person name="Shiratori A."/>
            <person name="Sudo H."/>
            <person name="Hosoiri T."/>
            <person name="Kaku Y."/>
            <person name="Kodaira H."/>
            <person name="Kondo H."/>
            <person name="Sugawara M."/>
            <person name="Takahashi M."/>
            <person name="Kanda K."/>
            <person name="Yokoi T."/>
            <person name="Furuya T."/>
            <person name="Kikkawa E."/>
            <person name="Omura Y."/>
            <person name="Abe K."/>
            <person name="Kamihara K."/>
            <person name="Katsuta N."/>
            <person name="Sato K."/>
            <person name="Tanikawa M."/>
            <person name="Yamazaki M."/>
            <person name="Ninomiya K."/>
            <person name="Ishibashi T."/>
            <person name="Yamashita H."/>
            <person name="Murakawa K."/>
            <person name="Fujimori K."/>
            <person name="Tanai H."/>
            <person name="Kimata M."/>
            <person name="Watanabe M."/>
            <person name="Hiraoka S."/>
            <person name="Chiba Y."/>
            <person name="Ishida S."/>
            <person name="Ono Y."/>
            <person name="Takiguchi S."/>
            <person name="Watanabe S."/>
            <person name="Yosida M."/>
            <person name="Hotuta T."/>
            <person name="Kusano J."/>
            <person name="Kanehori K."/>
            <person name="Takahashi-Fujii A."/>
            <person name="Hara H."/>
            <person name="Tanase T.-O."/>
            <person name="Nomura Y."/>
            <person name="Togiya S."/>
            <person name="Komai F."/>
            <person name="Hara R."/>
            <person name="Takeuchi K."/>
            <person name="Arita M."/>
            <person name="Imose N."/>
            <person name="Musashino K."/>
            <person name="Yuuki H."/>
            <person name="Oshima A."/>
            <person name="Sasaki N."/>
            <person name="Aotsuka S."/>
            <person name="Yoshikawa Y."/>
            <person name="Matsunawa H."/>
            <person name="Ichihara T."/>
            <person name="Shiohata N."/>
            <person name="Sano S."/>
            <person name="Moriya S."/>
            <person name="Momiyama H."/>
            <person name="Satoh N."/>
            <person name="Takami S."/>
            <person name="Terashima Y."/>
            <person name="Suzuki O."/>
            <person name="Nakagawa S."/>
            <person name="Senoh A."/>
            <person name="Mizoguchi H."/>
            <person name="Goto Y."/>
            <person name="Shimizu F."/>
            <person name="Wakebe H."/>
            <person name="Hishigaki H."/>
            <person name="Watanabe T."/>
            <person name="Sugiyama A."/>
            <person name="Takemoto M."/>
            <person name="Kawakami B."/>
            <person name="Yamazaki M."/>
            <person name="Watanabe K."/>
            <person name="Kumagai A."/>
            <person name="Itakura S."/>
            <person name="Fukuzumi Y."/>
            <person name="Fujimori Y."/>
            <person name="Komiyama M."/>
            <person name="Tashiro H."/>
            <person name="Tanigami A."/>
            <person name="Fujiwara T."/>
            <person name="Ono T."/>
            <person name="Yamada K."/>
            <person name="Fujii Y."/>
            <person name="Ozaki K."/>
            <person name="Hirao M."/>
            <person name="Ohmori Y."/>
            <person name="Kawabata A."/>
            <person name="Hikiji T."/>
            <person name="Kobatake N."/>
            <person name="Inagaki H."/>
            <person name="Ikema Y."/>
            <person name="Okamoto S."/>
            <person name="Okitani R."/>
            <person name="Kawakami T."/>
            <person name="Noguchi S."/>
            <person name="Itoh T."/>
            <person name="Shigeta K."/>
            <person name="Senba T."/>
            <person name="Matsumura K."/>
            <person name="Nakajima Y."/>
            <person name="Mizuno T."/>
            <person name="Morinaga M."/>
            <person name="Sasaki M."/>
            <person name="Togashi T."/>
            <person name="Oyama M."/>
            <person name="Hata H."/>
            <person name="Watanabe M."/>
            <person name="Komatsu T."/>
            <person name="Mizushima-Sugano J."/>
            <person name="Satoh T."/>
            <person name="Shirai Y."/>
            <person name="Takahashi Y."/>
            <person name="Nakagawa K."/>
            <person name="Okumura K."/>
            <person name="Nagase T."/>
            <person name="Nomura N."/>
            <person name="Kikuchi H."/>
            <person name="Masuho Y."/>
            <person name="Yamashita R."/>
            <person name="Nakai K."/>
            <person name="Yada T."/>
            <person name="Nakamura Y."/>
            <person name="Ohara O."/>
            <person name="Isogai T."/>
            <person name="Sugano S."/>
        </authorList>
    </citation>
    <scope>NUCLEOTIDE SEQUENCE [LARGE SCALE MRNA]</scope>
    <scope>VARIANTS PRO-40; GLU-122 AND LEU-242</scope>
</reference>
<reference key="4">
    <citation type="journal article" date="2005" name="Nature">
        <title>Generation and annotation of the DNA sequences of human chromosomes 2 and 4.</title>
        <authorList>
            <person name="Hillier L.W."/>
            <person name="Graves T.A."/>
            <person name="Fulton R.S."/>
            <person name="Fulton L.A."/>
            <person name="Pepin K.H."/>
            <person name="Minx P."/>
            <person name="Wagner-McPherson C."/>
            <person name="Layman D."/>
            <person name="Wylie K."/>
            <person name="Sekhon M."/>
            <person name="Becker M.C."/>
            <person name="Fewell G.A."/>
            <person name="Delehaunty K.D."/>
            <person name="Miner T.L."/>
            <person name="Nash W.E."/>
            <person name="Kremitzki C."/>
            <person name="Oddy L."/>
            <person name="Du H."/>
            <person name="Sun H."/>
            <person name="Bradshaw-Cordum H."/>
            <person name="Ali J."/>
            <person name="Carter J."/>
            <person name="Cordes M."/>
            <person name="Harris A."/>
            <person name="Isak A."/>
            <person name="van Brunt A."/>
            <person name="Nguyen C."/>
            <person name="Du F."/>
            <person name="Courtney L."/>
            <person name="Kalicki J."/>
            <person name="Ozersky P."/>
            <person name="Abbott S."/>
            <person name="Armstrong J."/>
            <person name="Belter E.A."/>
            <person name="Caruso L."/>
            <person name="Cedroni M."/>
            <person name="Cotton M."/>
            <person name="Davidson T."/>
            <person name="Desai A."/>
            <person name="Elliott G."/>
            <person name="Erb T."/>
            <person name="Fronick C."/>
            <person name="Gaige T."/>
            <person name="Haakenson W."/>
            <person name="Haglund K."/>
            <person name="Holmes A."/>
            <person name="Harkins R."/>
            <person name="Kim K."/>
            <person name="Kruchowski S.S."/>
            <person name="Strong C.M."/>
            <person name="Grewal N."/>
            <person name="Goyea E."/>
            <person name="Hou S."/>
            <person name="Levy A."/>
            <person name="Martinka S."/>
            <person name="Mead K."/>
            <person name="McLellan M.D."/>
            <person name="Meyer R."/>
            <person name="Randall-Maher J."/>
            <person name="Tomlinson C."/>
            <person name="Dauphin-Kohlberg S."/>
            <person name="Kozlowicz-Reilly A."/>
            <person name="Shah N."/>
            <person name="Swearengen-Shahid S."/>
            <person name="Snider J."/>
            <person name="Strong J.T."/>
            <person name="Thompson J."/>
            <person name="Yoakum M."/>
            <person name="Leonard S."/>
            <person name="Pearman C."/>
            <person name="Trani L."/>
            <person name="Radionenko M."/>
            <person name="Waligorski J.E."/>
            <person name="Wang C."/>
            <person name="Rock S.M."/>
            <person name="Tin-Wollam A.-M."/>
            <person name="Maupin R."/>
            <person name="Latreille P."/>
            <person name="Wendl M.C."/>
            <person name="Yang S.-P."/>
            <person name="Pohl C."/>
            <person name="Wallis J.W."/>
            <person name="Spieth J."/>
            <person name="Bieri T.A."/>
            <person name="Berkowicz N."/>
            <person name="Nelson J.O."/>
            <person name="Osborne J."/>
            <person name="Ding L."/>
            <person name="Meyer R."/>
            <person name="Sabo A."/>
            <person name="Shotland Y."/>
            <person name="Sinha P."/>
            <person name="Wohldmann P.E."/>
            <person name="Cook L.L."/>
            <person name="Hickenbotham M.T."/>
            <person name="Eldred J."/>
            <person name="Williams D."/>
            <person name="Jones T.A."/>
            <person name="She X."/>
            <person name="Ciccarelli F.D."/>
            <person name="Izaurralde E."/>
            <person name="Taylor J."/>
            <person name="Schmutz J."/>
            <person name="Myers R.M."/>
            <person name="Cox D.R."/>
            <person name="Huang X."/>
            <person name="McPherson J.D."/>
            <person name="Mardis E.R."/>
            <person name="Clifton S.W."/>
            <person name="Warren W.C."/>
            <person name="Chinwalla A.T."/>
            <person name="Eddy S.R."/>
            <person name="Marra M.A."/>
            <person name="Ovcharenko I."/>
            <person name="Furey T.S."/>
            <person name="Miller W."/>
            <person name="Eichler E.E."/>
            <person name="Bork P."/>
            <person name="Suyama M."/>
            <person name="Torrents D."/>
            <person name="Waterston R.H."/>
            <person name="Wilson R.K."/>
        </authorList>
    </citation>
    <scope>NUCLEOTIDE SEQUENCE [LARGE SCALE GENOMIC DNA]</scope>
</reference>
<reference key="5">
    <citation type="submission" date="2005-07" db="EMBL/GenBank/DDBJ databases">
        <authorList>
            <person name="Mural R.J."/>
            <person name="Istrail S."/>
            <person name="Sutton G."/>
            <person name="Florea L."/>
            <person name="Halpern A.L."/>
            <person name="Mobarry C.M."/>
            <person name="Lippert R."/>
            <person name="Walenz B."/>
            <person name="Shatkay H."/>
            <person name="Dew I."/>
            <person name="Miller J.R."/>
            <person name="Flanigan M.J."/>
            <person name="Edwards N.J."/>
            <person name="Bolanos R."/>
            <person name="Fasulo D."/>
            <person name="Halldorsson B.V."/>
            <person name="Hannenhalli S."/>
            <person name="Turner R."/>
            <person name="Yooseph S."/>
            <person name="Lu F."/>
            <person name="Nusskern D.R."/>
            <person name="Shue B.C."/>
            <person name="Zheng X.H."/>
            <person name="Zhong F."/>
            <person name="Delcher A.L."/>
            <person name="Huson D.H."/>
            <person name="Kravitz S.A."/>
            <person name="Mouchard L."/>
            <person name="Reinert K."/>
            <person name="Remington K.A."/>
            <person name="Clark A.G."/>
            <person name="Waterman M.S."/>
            <person name="Eichler E.E."/>
            <person name="Adams M.D."/>
            <person name="Hunkapiller M.W."/>
            <person name="Myers E.W."/>
            <person name="Venter J.C."/>
        </authorList>
    </citation>
    <scope>NUCLEOTIDE SEQUENCE [LARGE SCALE GENOMIC DNA]</scope>
    <scope>VARIANTS PRO-40 AND LEU-242</scope>
</reference>
<reference key="6">
    <citation type="journal article" date="2004" name="Genome Res.">
        <title>The status, quality, and expansion of the NIH full-length cDNA project: the Mammalian Gene Collection (MGC).</title>
        <authorList>
            <consortium name="The MGC Project Team"/>
        </authorList>
    </citation>
    <scope>NUCLEOTIDE SEQUENCE [LARGE SCALE MRNA]</scope>
    <scope>VARIANTS PRO-40; GLU-122 AND LEU-242</scope>
    <source>
        <tissue>Colon</tissue>
        <tissue>Placenta</tissue>
    </source>
</reference>
<reference key="7">
    <citation type="journal article" date="2009" name="EMBO J.">
        <title>Structure of the F-spondin domain of mindin, an integrin ligand and pattern recognition molecule.</title>
        <authorList>
            <person name="Li Y."/>
            <person name="Cao C."/>
            <person name="Jia W."/>
            <person name="Yu L."/>
            <person name="Mo M."/>
            <person name="Wang Q."/>
            <person name="Huang Y."/>
            <person name="Lim J.-M."/>
            <person name="Ishihara M."/>
            <person name="Wells L."/>
            <person name="Azadi P."/>
            <person name="Robinson H."/>
            <person name="He Y.-W."/>
            <person name="Zhang L."/>
            <person name="Mariuzza R.A."/>
        </authorList>
    </citation>
    <scope>X-RAY CRYSTALLOGRAPHY (1.8 ANGSTROMS) OF 27-249 IN COMPLEX WITH METAL IONS</scope>
    <scope>PARTIAL PROTEIN SEQUENCE</scope>
    <scope>IDENTIFICATION BY MASS SPECTROMETRY</scope>
    <scope>SUBUNIT</scope>
    <scope>GLYCOSYLATION AT TRP-283</scope>
    <scope>INTERACTION WITH INTEGRIN AND BACTERIAL LIPOPOLYSACCHARIDE</scope>
    <scope>MUTAGENESIS OF LYS-42 AND GLU-141</scope>
    <scope>DISULFIDE BOND</scope>
</reference>
<accession>Q9BUD6</accession>
<accession>D3DVN9</accession>
<accession>Q4W5N4</accession>
<accession>Q9ULW1</accession>
<comment type="function">
    <text evidence="1">Cell adhesion protein that promotes adhesion and outgrowth of hippocampal embryonic neurons. Binds directly to bacteria and their components and functions as an opsonin for macrophage phagocytosis of bacteria. Essential in the initiation of the innate immune response and represents a unique pattern-recognition molecule in the ECM for microbial pathogens (By similarity). Binds bacterial lipopolysaccharide (LPS).</text>
</comment>
<comment type="subunit">
    <text evidence="9">Monomer. Interacts with integrin.</text>
</comment>
<comment type="interaction">
    <interactant intactId="EBI-10298801">
        <id>Q9BUD6</id>
    </interactant>
    <interactant intactId="EBI-11954292">
        <id>Q86V38</id>
        <label>ATN1</label>
    </interactant>
    <organismsDiffer>false</organismsDiffer>
    <experiments>3</experiments>
</comment>
<comment type="interaction">
    <interactant intactId="EBI-10298801">
        <id>Q9BUD6</id>
    </interactant>
    <interactant intactId="EBI-2432309">
        <id>Q92876</id>
        <label>KLK6</label>
    </interactant>
    <organismsDiffer>false</organismsDiffer>
    <experiments>3</experiments>
</comment>
<comment type="interaction">
    <interactant intactId="EBI-10298801">
        <id>Q9BUD6</id>
    </interactant>
    <interactant intactId="EBI-948001">
        <id>Q15323</id>
        <label>KRT31</label>
    </interactant>
    <organismsDiffer>false</organismsDiffer>
    <experiments>6</experiments>
</comment>
<comment type="interaction">
    <interactant intactId="EBI-10298801">
        <id>Q9BUD6</id>
    </interactant>
    <interactant intactId="EBI-742388">
        <id>Q9H8W4</id>
        <label>PLEKHF2</label>
    </interactant>
    <organismsDiffer>false</organismsDiffer>
    <experiments>3</experiments>
</comment>
<comment type="subcellular location">
    <subcellularLocation>
        <location evidence="1">Secreted</location>
        <location evidence="1">Extracellular space</location>
        <location evidence="1">Extracellular matrix</location>
    </subcellularLocation>
</comment>
<comment type="tissue specificity">
    <text evidence="5">Expressed in normal lung tissue but not in lung carcinoma cell lines.</text>
</comment>
<evidence type="ECO:0000250" key="1"/>
<evidence type="ECO:0000255" key="2"/>
<evidence type="ECO:0000255" key="3">
    <source>
        <dbReference type="PROSITE-ProRule" id="PRU00210"/>
    </source>
</evidence>
<evidence type="ECO:0000255" key="4">
    <source>
        <dbReference type="PROSITE-ProRule" id="PRU00364"/>
    </source>
</evidence>
<evidence type="ECO:0000269" key="5">
    <source>
    </source>
</evidence>
<evidence type="ECO:0000269" key="6">
    <source>
    </source>
</evidence>
<evidence type="ECO:0000269" key="7">
    <source>
    </source>
</evidence>
<evidence type="ECO:0000269" key="8">
    <source>
    </source>
</evidence>
<evidence type="ECO:0000269" key="9">
    <source>
    </source>
</evidence>
<evidence type="ECO:0000269" key="10">
    <source ref="5"/>
</evidence>
<evidence type="ECO:0000305" key="11"/>
<evidence type="ECO:0000305" key="12">
    <source>
    </source>
</evidence>
<evidence type="ECO:0007744" key="13">
    <source>
        <dbReference type="PDB" id="3D34"/>
    </source>
</evidence>
<evidence type="ECO:0007829" key="14">
    <source>
        <dbReference type="PDB" id="3D34"/>
    </source>
</evidence>
<organism>
    <name type="scientific">Homo sapiens</name>
    <name type="common">Human</name>
    <dbReference type="NCBI Taxonomy" id="9606"/>
    <lineage>
        <taxon>Eukaryota</taxon>
        <taxon>Metazoa</taxon>
        <taxon>Chordata</taxon>
        <taxon>Craniata</taxon>
        <taxon>Vertebrata</taxon>
        <taxon>Euteleostomi</taxon>
        <taxon>Mammalia</taxon>
        <taxon>Eutheria</taxon>
        <taxon>Euarchontoglires</taxon>
        <taxon>Primates</taxon>
        <taxon>Haplorrhini</taxon>
        <taxon>Catarrhini</taxon>
        <taxon>Hominidae</taxon>
        <taxon>Homo</taxon>
    </lineage>
</organism>
<dbReference type="EMBL" id="AB027466">
    <property type="protein sequence ID" value="BAA85892.1"/>
    <property type="molecule type" value="mRNA"/>
</dbReference>
<dbReference type="EMBL" id="AY358948">
    <property type="protein sequence ID" value="AAQ89307.1"/>
    <property type="molecule type" value="mRNA"/>
</dbReference>
<dbReference type="EMBL" id="AK074618">
    <property type="protein sequence ID" value="BAC11092.1"/>
    <property type="molecule type" value="mRNA"/>
</dbReference>
<dbReference type="EMBL" id="AK074770">
    <property type="protein sequence ID" value="BAC11196.1"/>
    <property type="molecule type" value="mRNA"/>
</dbReference>
<dbReference type="EMBL" id="AC092535">
    <property type="protein sequence ID" value="AAY40988.1"/>
    <property type="molecule type" value="Genomic_DNA"/>
</dbReference>
<dbReference type="EMBL" id="CH471131">
    <property type="protein sequence ID" value="EAW82604.1"/>
    <property type="molecule type" value="Genomic_DNA"/>
</dbReference>
<dbReference type="EMBL" id="CH471131">
    <property type="protein sequence ID" value="EAW82606.1"/>
    <property type="molecule type" value="Genomic_DNA"/>
</dbReference>
<dbReference type="EMBL" id="BC002707">
    <property type="protein sequence ID" value="AAH02707.1"/>
    <property type="molecule type" value="mRNA"/>
</dbReference>
<dbReference type="EMBL" id="BC036341">
    <property type="protein sequence ID" value="AAH36341.1"/>
    <property type="molecule type" value="mRNA"/>
</dbReference>
<dbReference type="RefSeq" id="NP_001121797.2">
    <property type="nucleotide sequence ID" value="NM_001128325.3"/>
</dbReference>
<dbReference type="RefSeq" id="NP_001185950.2">
    <property type="nucleotide sequence ID" value="NM_001199021.2"/>
</dbReference>
<dbReference type="RefSeq" id="NP_036577.2">
    <property type="nucleotide sequence ID" value="NM_012445.4"/>
</dbReference>
<dbReference type="PDB" id="3D34">
    <property type="method" value="X-ray"/>
    <property type="resolution" value="1.80 A"/>
    <property type="chains" value="A/B=27-249"/>
</dbReference>
<dbReference type="PDBsum" id="3D34"/>
<dbReference type="SMR" id="Q9BUD6"/>
<dbReference type="BioGRID" id="115686">
    <property type="interactions" value="10"/>
</dbReference>
<dbReference type="FunCoup" id="Q9BUD6">
    <property type="interactions" value="36"/>
</dbReference>
<dbReference type="IntAct" id="Q9BUD6">
    <property type="interactions" value="8"/>
</dbReference>
<dbReference type="STRING" id="9606.ENSP00000483599"/>
<dbReference type="GlyCosmos" id="Q9BUD6">
    <property type="glycosylation" value="2 sites, 1 glycan"/>
</dbReference>
<dbReference type="GlyGen" id="Q9BUD6">
    <property type="glycosylation" value="2 sites, 1 O-linked glycan (1 site)"/>
</dbReference>
<dbReference type="iPTMnet" id="Q9BUD6"/>
<dbReference type="PhosphoSitePlus" id="Q9BUD6"/>
<dbReference type="SwissPalm" id="Q9BUD6"/>
<dbReference type="BioMuta" id="SPON2"/>
<dbReference type="DMDM" id="313104285"/>
<dbReference type="jPOST" id="Q9BUD6"/>
<dbReference type="MassIVE" id="Q9BUD6"/>
<dbReference type="PaxDb" id="9606-ENSP00000483599"/>
<dbReference type="PeptideAtlas" id="Q9BUD6"/>
<dbReference type="ProteomicsDB" id="79078"/>
<dbReference type="Antibodypedia" id="22210">
    <property type="antibodies" value="302 antibodies from 34 providers"/>
</dbReference>
<dbReference type="DNASU" id="10417"/>
<dbReference type="Ensembl" id="ENST00000290902.10">
    <property type="protein sequence ID" value="ENSP00000290902.5"/>
    <property type="gene ID" value="ENSG00000159674.12"/>
</dbReference>
<dbReference type="Ensembl" id="ENST00000431380.5">
    <property type="protein sequence ID" value="ENSP00000394832.1"/>
    <property type="gene ID" value="ENSG00000159674.12"/>
</dbReference>
<dbReference type="Ensembl" id="ENST00000617421.4">
    <property type="protein sequence ID" value="ENSP00000483599.1"/>
    <property type="gene ID" value="ENSG00000159674.12"/>
</dbReference>
<dbReference type="GeneID" id="10417"/>
<dbReference type="KEGG" id="hsa:10417"/>
<dbReference type="MANE-Select" id="ENST00000290902.10">
    <property type="protein sequence ID" value="ENSP00000290902.5"/>
    <property type="RefSeq nucleotide sequence ID" value="NM_012445.4"/>
    <property type="RefSeq protein sequence ID" value="NP_036577.2"/>
</dbReference>
<dbReference type="UCSC" id="uc003gco.5">
    <property type="organism name" value="human"/>
</dbReference>
<dbReference type="AGR" id="HGNC:11253"/>
<dbReference type="CTD" id="10417"/>
<dbReference type="DisGeNET" id="10417"/>
<dbReference type="GeneCards" id="SPON2"/>
<dbReference type="HGNC" id="HGNC:11253">
    <property type="gene designation" value="SPON2"/>
</dbReference>
<dbReference type="HPA" id="ENSG00000159674">
    <property type="expression patterns" value="Tissue enhanced (endometrium)"/>
</dbReference>
<dbReference type="MIM" id="605918">
    <property type="type" value="gene"/>
</dbReference>
<dbReference type="neXtProt" id="NX_Q9BUD6"/>
<dbReference type="OpenTargets" id="ENSG00000159674"/>
<dbReference type="PharmGKB" id="PA36083"/>
<dbReference type="VEuPathDB" id="HostDB:ENSG00000159674"/>
<dbReference type="eggNOG" id="KOG3539">
    <property type="taxonomic scope" value="Eukaryota"/>
</dbReference>
<dbReference type="GeneTree" id="ENSGT00940000159900"/>
<dbReference type="HOGENOM" id="CLU_034407_0_0_1"/>
<dbReference type="InParanoid" id="Q9BUD6"/>
<dbReference type="OMA" id="PQDRITQ"/>
<dbReference type="OrthoDB" id="6090599at2759"/>
<dbReference type="PAN-GO" id="Q9BUD6">
    <property type="GO annotations" value="2 GO annotations based on evolutionary models"/>
</dbReference>
<dbReference type="PhylomeDB" id="Q9BUD6"/>
<dbReference type="TreeFam" id="TF326913"/>
<dbReference type="PathwayCommons" id="Q9BUD6"/>
<dbReference type="Reactome" id="R-HSA-5083635">
    <property type="pathway name" value="Defective B3GALTL causes PpS"/>
</dbReference>
<dbReference type="Reactome" id="R-HSA-5173214">
    <property type="pathway name" value="O-glycosylation of TSR domain-containing proteins"/>
</dbReference>
<dbReference type="SignaLink" id="Q9BUD6"/>
<dbReference type="BioGRID-ORCS" id="10417">
    <property type="hits" value="10 hits in 1148 CRISPR screens"/>
</dbReference>
<dbReference type="ChiTaRS" id="SPON2">
    <property type="organism name" value="human"/>
</dbReference>
<dbReference type="EvolutionaryTrace" id="Q9BUD6"/>
<dbReference type="GenomeRNAi" id="10417"/>
<dbReference type="Pharos" id="Q9BUD6">
    <property type="development level" value="Tbio"/>
</dbReference>
<dbReference type="PRO" id="PR:Q9BUD6"/>
<dbReference type="Proteomes" id="UP000005640">
    <property type="component" value="Chromosome 4"/>
</dbReference>
<dbReference type="RNAct" id="Q9BUD6">
    <property type="molecule type" value="protein"/>
</dbReference>
<dbReference type="Bgee" id="ENSG00000159674">
    <property type="expression patterns" value="Expressed in granulocyte and 186 other cell types or tissues"/>
</dbReference>
<dbReference type="ExpressionAtlas" id="Q9BUD6">
    <property type="expression patterns" value="baseline and differential"/>
</dbReference>
<dbReference type="GO" id="GO:0070062">
    <property type="term" value="C:extracellular exosome"/>
    <property type="evidence" value="ECO:0007005"/>
    <property type="project" value="UniProtKB"/>
</dbReference>
<dbReference type="GO" id="GO:0031012">
    <property type="term" value="C:extracellular matrix"/>
    <property type="evidence" value="ECO:0000318"/>
    <property type="project" value="GO_Central"/>
</dbReference>
<dbReference type="GO" id="GO:0003823">
    <property type="term" value="F:antigen binding"/>
    <property type="evidence" value="ECO:0007669"/>
    <property type="project" value="Ensembl"/>
</dbReference>
<dbReference type="GO" id="GO:0001530">
    <property type="term" value="F:lipopolysaccharide binding"/>
    <property type="evidence" value="ECO:0007669"/>
    <property type="project" value="Ensembl"/>
</dbReference>
<dbReference type="GO" id="GO:0046872">
    <property type="term" value="F:metal ion binding"/>
    <property type="evidence" value="ECO:0007669"/>
    <property type="project" value="UniProtKB-KW"/>
</dbReference>
<dbReference type="GO" id="GO:0007155">
    <property type="term" value="P:cell adhesion"/>
    <property type="evidence" value="ECO:0000318"/>
    <property type="project" value="GO_Central"/>
</dbReference>
<dbReference type="GO" id="GO:0071222">
    <property type="term" value="P:cellular response to lipopolysaccharide"/>
    <property type="evidence" value="ECO:0007669"/>
    <property type="project" value="Ensembl"/>
</dbReference>
<dbReference type="GO" id="GO:0050832">
    <property type="term" value="P:defense response to fungus"/>
    <property type="evidence" value="ECO:0007669"/>
    <property type="project" value="Ensembl"/>
</dbReference>
<dbReference type="GO" id="GO:0051607">
    <property type="term" value="P:defense response to virus"/>
    <property type="evidence" value="ECO:0007669"/>
    <property type="project" value="Ensembl"/>
</dbReference>
<dbReference type="GO" id="GO:0043152">
    <property type="term" value="P:induction of bacterial agglutination"/>
    <property type="evidence" value="ECO:0007669"/>
    <property type="project" value="Ensembl"/>
</dbReference>
<dbReference type="GO" id="GO:0045087">
    <property type="term" value="P:innate immune response"/>
    <property type="evidence" value="ECO:0007669"/>
    <property type="project" value="UniProtKB-KW"/>
</dbReference>
<dbReference type="GO" id="GO:0002448">
    <property type="term" value="P:mast cell mediated immunity"/>
    <property type="evidence" value="ECO:0007669"/>
    <property type="project" value="Ensembl"/>
</dbReference>
<dbReference type="GO" id="GO:0008228">
    <property type="term" value="P:opsonization"/>
    <property type="evidence" value="ECO:0007669"/>
    <property type="project" value="Ensembl"/>
</dbReference>
<dbReference type="GO" id="GO:0032755">
    <property type="term" value="P:positive regulation of interleukin-6 production"/>
    <property type="evidence" value="ECO:0007669"/>
    <property type="project" value="Ensembl"/>
</dbReference>
<dbReference type="GO" id="GO:0060907">
    <property type="term" value="P:positive regulation of macrophage cytokine production"/>
    <property type="evidence" value="ECO:0007669"/>
    <property type="project" value="Ensembl"/>
</dbReference>
<dbReference type="GO" id="GO:0032760">
    <property type="term" value="P:positive regulation of tumor necrosis factor production"/>
    <property type="evidence" value="ECO:0007669"/>
    <property type="project" value="Ensembl"/>
</dbReference>
<dbReference type="FunFam" id="2.20.100.10:FF:000037">
    <property type="entry name" value="Spondin 2"/>
    <property type="match status" value="1"/>
</dbReference>
<dbReference type="FunFam" id="2.60.40.2130:FF:000003">
    <property type="entry name" value="Spondin 2"/>
    <property type="match status" value="1"/>
</dbReference>
<dbReference type="Gene3D" id="2.60.40.2130">
    <property type="entry name" value="F-spondin domain"/>
    <property type="match status" value="1"/>
</dbReference>
<dbReference type="Gene3D" id="2.20.100.10">
    <property type="entry name" value="Thrombospondin type-1 (TSP1) repeat"/>
    <property type="match status" value="1"/>
</dbReference>
<dbReference type="InterPro" id="IPR051418">
    <property type="entry name" value="Spondin/Thrombospondin_T1"/>
</dbReference>
<dbReference type="InterPro" id="IPR009465">
    <property type="entry name" value="Spondin_N"/>
</dbReference>
<dbReference type="InterPro" id="IPR038678">
    <property type="entry name" value="Spondin_N_sf"/>
</dbReference>
<dbReference type="InterPro" id="IPR000884">
    <property type="entry name" value="TSP1_rpt"/>
</dbReference>
<dbReference type="InterPro" id="IPR036383">
    <property type="entry name" value="TSP1_rpt_sf"/>
</dbReference>
<dbReference type="InterPro" id="IPR044004">
    <property type="entry name" value="TSP1_spondin_dom"/>
</dbReference>
<dbReference type="NCBIfam" id="NF038123">
    <property type="entry name" value="NF038123_dom"/>
    <property type="match status" value="1"/>
</dbReference>
<dbReference type="PANTHER" id="PTHR11311">
    <property type="entry name" value="SPONDIN"/>
    <property type="match status" value="1"/>
</dbReference>
<dbReference type="PANTHER" id="PTHR11311:SF15">
    <property type="entry name" value="SPONDIN-2"/>
    <property type="match status" value="1"/>
</dbReference>
<dbReference type="Pfam" id="PF06468">
    <property type="entry name" value="Spond_N"/>
    <property type="match status" value="1"/>
</dbReference>
<dbReference type="Pfam" id="PF19028">
    <property type="entry name" value="TSP1_spondin"/>
    <property type="match status" value="1"/>
</dbReference>
<dbReference type="SMART" id="SM00209">
    <property type="entry name" value="TSP1"/>
    <property type="match status" value="1"/>
</dbReference>
<dbReference type="SUPFAM" id="SSF82895">
    <property type="entry name" value="TSP-1 type 1 repeat"/>
    <property type="match status" value="1"/>
</dbReference>
<dbReference type="PROSITE" id="PS51020">
    <property type="entry name" value="SPONDIN"/>
    <property type="match status" value="1"/>
</dbReference>
<dbReference type="PROSITE" id="PS50092">
    <property type="entry name" value="TSP1"/>
    <property type="match status" value="1"/>
</dbReference>
<keyword id="KW-0002">3D-structure</keyword>
<keyword id="KW-0106">Calcium</keyword>
<keyword id="KW-0130">Cell adhesion</keyword>
<keyword id="KW-0903">Direct protein sequencing</keyword>
<keyword id="KW-1015">Disulfide bond</keyword>
<keyword id="KW-0272">Extracellular matrix</keyword>
<keyword id="KW-0325">Glycoprotein</keyword>
<keyword id="KW-0391">Immunity</keyword>
<keyword id="KW-0399">Innate immunity</keyword>
<keyword id="KW-0479">Metal-binding</keyword>
<keyword id="KW-1267">Proteomics identification</keyword>
<keyword id="KW-1185">Reference proteome</keyword>
<keyword id="KW-0964">Secreted</keyword>
<keyword id="KW-0732">Signal</keyword>
<gene>
    <name type="primary">SPON2</name>
    <name type="synonym">DIL1</name>
    <name type="ORF">UNQ435/PRO866</name>
</gene>
<sequence>MENPSPAAALGKALCALLLATLGAAGQPLGGESICSARALAKYSITFTGKWSQTAFPKQYPLFRPPAQWSSLLGAAHSSDYSMWRKNQYVSNGLRDFAERGEAWALMKEIEAAGEALQSVHAVFSAPAVPSGTGQTSAELEVQRRHSLVSFVVRIVPSPDWFVGVDSLDLCDGDRWREQAALDLYPYDAGTDSGFTFSSPNFATIPQDTVTEITSSSPSHPANSFYYPRLKALPPIARVTLVRLRQSPRAFIPPAPVLPSRDNEIVDSASVPETPLDCEVSLWSSWGLCGGHCGRLGTKSRTRYVRVQPANNGSPCPELEEEAECVPDNCV</sequence>
<name>SPON2_HUMAN</name>
<protein>
    <recommendedName>
        <fullName>Spondin-2</fullName>
    </recommendedName>
    <alternativeName>
        <fullName>Differentially expressed in cancerous and non-cancerous lung cells 1</fullName>
        <shortName>DIL-1</shortName>
    </alternativeName>
    <alternativeName>
        <fullName>Mindin</fullName>
    </alternativeName>
</protein>
<proteinExistence type="evidence at protein level"/>